<feature type="chain" id="PRO_0000348595" description="Cryptochrome-1">
    <location>
        <begin position="1"/>
        <end position="545"/>
    </location>
</feature>
<feature type="domain" description="Photolyase/cryptochrome alpha/beta">
    <location>
        <begin position="3"/>
        <end position="138"/>
    </location>
</feature>
<feature type="binding site" evidence="1">
    <location>
        <position position="236"/>
    </location>
    <ligand>
        <name>FAD</name>
        <dbReference type="ChEBI" id="CHEBI:57692"/>
    </ligand>
</feature>
<feature type="binding site" evidence="1">
    <location>
        <position position="264"/>
    </location>
    <ligand>
        <name>FAD</name>
        <dbReference type="ChEBI" id="CHEBI:57692"/>
    </ligand>
</feature>
<feature type="binding site" evidence="1">
    <location>
        <position position="266"/>
    </location>
    <ligand>
        <name>FAD</name>
        <dbReference type="ChEBI" id="CHEBI:57692"/>
    </ligand>
</feature>
<feature type="binding site" evidence="1">
    <location>
        <position position="307"/>
    </location>
    <ligand>
        <name>FAD</name>
        <dbReference type="ChEBI" id="CHEBI:57692"/>
    </ligand>
</feature>
<feature type="binding site" evidence="1">
    <location>
        <position position="374"/>
    </location>
    <ligand>
        <name>FAD</name>
        <dbReference type="ChEBI" id="CHEBI:57692"/>
    </ligand>
</feature>
<feature type="binding site" evidence="1">
    <location>
        <begin position="406"/>
        <end position="408"/>
    </location>
    <ligand>
        <name>FAD</name>
        <dbReference type="ChEBI" id="CHEBI:57692"/>
    </ligand>
</feature>
<feature type="binding site" evidence="1">
    <location>
        <position position="412"/>
    </location>
    <ligand>
        <name>FAD</name>
        <dbReference type="ChEBI" id="CHEBI:57692"/>
    </ligand>
</feature>
<feature type="binding site" evidence="1">
    <location>
        <position position="415"/>
    </location>
    <ligand>
        <name>FAD</name>
        <dbReference type="ChEBI" id="CHEBI:57692"/>
    </ligand>
</feature>
<dbReference type="EMBL" id="CH477293">
    <property type="protein sequence ID" value="EAT44496.1"/>
    <property type="molecule type" value="Genomic_DNA"/>
</dbReference>
<dbReference type="RefSeq" id="XP_001648498.1">
    <property type="nucleotide sequence ID" value="XM_001648448.1"/>
</dbReference>
<dbReference type="SMR" id="Q17DK5"/>
<dbReference type="FunCoup" id="Q17DK5">
    <property type="interactions" value="18"/>
</dbReference>
<dbReference type="STRING" id="7159.Q17DK5"/>
<dbReference type="PaxDb" id="7159-AAEL004146-PA"/>
<dbReference type="GeneID" id="5564182"/>
<dbReference type="KEGG" id="aag:5564182"/>
<dbReference type="CTD" id="42305"/>
<dbReference type="VEuPathDB" id="VectorBase:AAEL004146"/>
<dbReference type="eggNOG" id="KOG0133">
    <property type="taxonomic scope" value="Eukaryota"/>
</dbReference>
<dbReference type="HOGENOM" id="CLU_010348_3_4_1"/>
<dbReference type="InParanoid" id="Q17DK5"/>
<dbReference type="OMA" id="IWFRHGL"/>
<dbReference type="OrthoDB" id="435881at2759"/>
<dbReference type="PhylomeDB" id="Q17DK5"/>
<dbReference type="Proteomes" id="UP000008820">
    <property type="component" value="Unassembled WGS sequence"/>
</dbReference>
<dbReference type="Proteomes" id="UP000682892">
    <property type="component" value="Unassembled WGS sequence"/>
</dbReference>
<dbReference type="GO" id="GO:0005737">
    <property type="term" value="C:cytoplasm"/>
    <property type="evidence" value="ECO:0000250"/>
    <property type="project" value="UniProtKB"/>
</dbReference>
<dbReference type="GO" id="GO:0005634">
    <property type="term" value="C:nucleus"/>
    <property type="evidence" value="ECO:0000250"/>
    <property type="project" value="UniProtKB"/>
</dbReference>
<dbReference type="GO" id="GO:0048471">
    <property type="term" value="C:perinuclear region of cytoplasm"/>
    <property type="evidence" value="ECO:0007669"/>
    <property type="project" value="UniProtKB-SubCell"/>
</dbReference>
<dbReference type="GO" id="GO:0009882">
    <property type="term" value="F:blue light photoreceptor activity"/>
    <property type="evidence" value="ECO:0000250"/>
    <property type="project" value="UniProtKB"/>
</dbReference>
<dbReference type="GO" id="GO:0003677">
    <property type="term" value="F:DNA binding"/>
    <property type="evidence" value="ECO:0007669"/>
    <property type="project" value="TreeGrafter"/>
</dbReference>
<dbReference type="GO" id="GO:0071949">
    <property type="term" value="F:FAD binding"/>
    <property type="evidence" value="ECO:0007669"/>
    <property type="project" value="TreeGrafter"/>
</dbReference>
<dbReference type="GO" id="GO:0050660">
    <property type="term" value="F:flavin adenine dinucleotide binding"/>
    <property type="evidence" value="ECO:0000250"/>
    <property type="project" value="UniProtKB"/>
</dbReference>
<dbReference type="GO" id="GO:0032922">
    <property type="term" value="P:circadian regulation of gene expression"/>
    <property type="evidence" value="ECO:0007669"/>
    <property type="project" value="TreeGrafter"/>
</dbReference>
<dbReference type="GO" id="GO:0043153">
    <property type="term" value="P:entrainment of circadian clock by photoperiod"/>
    <property type="evidence" value="ECO:0007669"/>
    <property type="project" value="TreeGrafter"/>
</dbReference>
<dbReference type="GO" id="GO:0045892">
    <property type="term" value="P:negative regulation of DNA-templated transcription"/>
    <property type="evidence" value="ECO:0000250"/>
    <property type="project" value="UniProtKB"/>
</dbReference>
<dbReference type="GO" id="GO:0006139">
    <property type="term" value="P:nucleobase-containing compound metabolic process"/>
    <property type="evidence" value="ECO:0007669"/>
    <property type="project" value="UniProtKB-ARBA"/>
</dbReference>
<dbReference type="GO" id="GO:0042752">
    <property type="term" value="P:regulation of circadian rhythm"/>
    <property type="evidence" value="ECO:0000250"/>
    <property type="project" value="UniProtKB"/>
</dbReference>
<dbReference type="GO" id="GO:0006950">
    <property type="term" value="P:response to stress"/>
    <property type="evidence" value="ECO:0007669"/>
    <property type="project" value="UniProtKB-ARBA"/>
</dbReference>
<dbReference type="Gene3D" id="1.25.40.80">
    <property type="match status" value="1"/>
</dbReference>
<dbReference type="Gene3D" id="1.10.579.10">
    <property type="entry name" value="DNA Cyclobutane Dipyrimidine Photolyase, subunit A, domain 3"/>
    <property type="match status" value="1"/>
</dbReference>
<dbReference type="Gene3D" id="3.40.50.620">
    <property type="entry name" value="HUPs"/>
    <property type="match status" value="1"/>
</dbReference>
<dbReference type="InterPro" id="IPR036134">
    <property type="entry name" value="Crypto/Photolyase_FAD-like_sf"/>
</dbReference>
<dbReference type="InterPro" id="IPR036155">
    <property type="entry name" value="Crypto/Photolyase_N_sf"/>
</dbReference>
<dbReference type="InterPro" id="IPR005101">
    <property type="entry name" value="Cryptochr/Photolyase_FAD-bd"/>
</dbReference>
<dbReference type="InterPro" id="IPR002081">
    <property type="entry name" value="Cryptochrome/DNA_photolyase_1"/>
</dbReference>
<dbReference type="InterPro" id="IPR018394">
    <property type="entry name" value="DNA_photolyase_1_CS_C"/>
</dbReference>
<dbReference type="InterPro" id="IPR006050">
    <property type="entry name" value="DNA_photolyase_N"/>
</dbReference>
<dbReference type="InterPro" id="IPR014729">
    <property type="entry name" value="Rossmann-like_a/b/a_fold"/>
</dbReference>
<dbReference type="PANTHER" id="PTHR11455">
    <property type="entry name" value="CRYPTOCHROME"/>
    <property type="match status" value="1"/>
</dbReference>
<dbReference type="PANTHER" id="PTHR11455:SF17">
    <property type="entry name" value="CRYPTOCHROME-1"/>
    <property type="match status" value="1"/>
</dbReference>
<dbReference type="Pfam" id="PF00875">
    <property type="entry name" value="DNA_photolyase"/>
    <property type="match status" value="1"/>
</dbReference>
<dbReference type="Pfam" id="PF03441">
    <property type="entry name" value="FAD_binding_7"/>
    <property type="match status" value="1"/>
</dbReference>
<dbReference type="PRINTS" id="PR00147">
    <property type="entry name" value="DNAPHOTLYASE"/>
</dbReference>
<dbReference type="SUPFAM" id="SSF48173">
    <property type="entry name" value="Cryptochrome/photolyase FAD-binding domain"/>
    <property type="match status" value="1"/>
</dbReference>
<dbReference type="SUPFAM" id="SSF52425">
    <property type="entry name" value="Cryptochrome/photolyase, N-terminal domain"/>
    <property type="match status" value="1"/>
</dbReference>
<dbReference type="PROSITE" id="PS00394">
    <property type="entry name" value="DNA_PHOTOLYASES_1_1"/>
    <property type="match status" value="1"/>
</dbReference>
<dbReference type="PROSITE" id="PS51645">
    <property type="entry name" value="PHR_CRY_ALPHA_BETA"/>
    <property type="match status" value="1"/>
</dbReference>
<sequence length="545" mass="62541">MTVNNILWFRHGLRLHDNPSLLEALRNDGTGSESVRLYPIFIFDGESAGTKLVGFNRMKFLLESLADLDRQLREIGGQLYVFKGNAVNVMRRLFEELNIRKLCFEQDCEPIWKARDDAIQNLCRMMDVKCVEKVSHTLWDPQQIIRTNGGIPPLTYQMFLHTVDIIGKPPRPVAAPSFEFVEFGSIPSILAQEVKLQQVRNLSPEDFGIYYEGNPDISHQQWMGGETKALECLGHRLKQEEEAFLGGYFLPTQAKPEFLVPPTSMSAALRFGCLSVRMFYWCVHDLYEKVQANNQYRNPGGQHITGQLIWREYFYTMSVHNPHYAEMEANPICLNIPWYEPKDDSLDRWKEGRTGFPMIDAAMRQLLAEGWLHHILRNITATFLTRGALWISWEAGVQHFLKYLLDADWSVCAGNWMWVSSSAFEKLLDSSSCTSPIALARRLDPKGEYVRRYLPELKNLPTLYVHEPWKAPLDVQKECGCIVGRDYPAPMIDLAAASRANANTMNSIRQKLMERGGSTPPHCRPSDVEEIRNFFWLPEDVVADC</sequence>
<accession>Q17DK5</accession>
<reference evidence="4" key="1">
    <citation type="journal article" date="2007" name="Science">
        <title>Genome sequence of Aedes aegypti, a major arbovirus vector.</title>
        <authorList>
            <person name="Nene V."/>
            <person name="Wortman J.R."/>
            <person name="Lawson D."/>
            <person name="Haas B.J."/>
            <person name="Kodira C.D."/>
            <person name="Tu Z.J."/>
            <person name="Loftus B.J."/>
            <person name="Xi Z."/>
            <person name="Megy K."/>
            <person name="Grabherr M."/>
            <person name="Ren Q."/>
            <person name="Zdobnov E.M."/>
            <person name="Lobo N.F."/>
            <person name="Campbell K.S."/>
            <person name="Brown S.E."/>
            <person name="Bonaldo M.F."/>
            <person name="Zhu J."/>
            <person name="Sinkins S.P."/>
            <person name="Hogenkamp D.G."/>
            <person name="Amedeo P."/>
            <person name="Arensburger P."/>
            <person name="Atkinson P.W."/>
            <person name="Bidwell S.L."/>
            <person name="Biedler J."/>
            <person name="Birney E."/>
            <person name="Bruggner R.V."/>
            <person name="Costas J."/>
            <person name="Coy M.R."/>
            <person name="Crabtree J."/>
            <person name="Crawford M."/>
            <person name="DeBruyn B."/>
            <person name="DeCaprio D."/>
            <person name="Eiglmeier K."/>
            <person name="Eisenstadt E."/>
            <person name="El-Dorry H."/>
            <person name="Gelbart W.M."/>
            <person name="Gomes S.L."/>
            <person name="Hammond M."/>
            <person name="Hannick L.I."/>
            <person name="Hogan J.R."/>
            <person name="Holmes M.H."/>
            <person name="Jaffe D."/>
            <person name="Johnston S.J."/>
            <person name="Kennedy R.C."/>
            <person name="Koo H."/>
            <person name="Kravitz S."/>
            <person name="Kriventseva E.V."/>
            <person name="Kulp D."/>
            <person name="Labutti K."/>
            <person name="Lee E."/>
            <person name="Li S."/>
            <person name="Lovin D.D."/>
            <person name="Mao C."/>
            <person name="Mauceli E."/>
            <person name="Menck C.F."/>
            <person name="Miller J.R."/>
            <person name="Montgomery P."/>
            <person name="Mori A."/>
            <person name="Nascimento A.L."/>
            <person name="Naveira H.F."/>
            <person name="Nusbaum C."/>
            <person name="O'Leary S.B."/>
            <person name="Orvis J."/>
            <person name="Pertea M."/>
            <person name="Quesneville H."/>
            <person name="Reidenbach K.R."/>
            <person name="Rogers Y.-H.C."/>
            <person name="Roth C.W."/>
            <person name="Schneider J.R."/>
            <person name="Schatz M."/>
            <person name="Shumway M."/>
            <person name="Stanke M."/>
            <person name="Stinson E.O."/>
            <person name="Tubio J.M.C."/>
            <person name="Vanzee J.P."/>
            <person name="Verjovski-Almeida S."/>
            <person name="Werner D."/>
            <person name="White O.R."/>
            <person name="Wyder S."/>
            <person name="Zeng Q."/>
            <person name="Zhao Q."/>
            <person name="Zhao Y."/>
            <person name="Hill C.A."/>
            <person name="Raikhel A.S."/>
            <person name="Soares M.B."/>
            <person name="Knudson D.L."/>
            <person name="Lee N.H."/>
            <person name="Galagan J."/>
            <person name="Salzberg S.L."/>
            <person name="Paulsen I.T."/>
            <person name="Dimopoulos G."/>
            <person name="Collins F.H."/>
            <person name="Bruce B."/>
            <person name="Fraser-Liggett C.M."/>
            <person name="Severson D.W."/>
        </authorList>
    </citation>
    <scope>NUCLEOTIDE SEQUENCE [LARGE SCALE GENOMIC DNA]</scope>
    <source>
        <strain>LVPib12</strain>
    </source>
</reference>
<protein>
    <recommendedName>
        <fullName>Cryptochrome-1</fullName>
    </recommendedName>
</protein>
<proteinExistence type="inferred from homology"/>
<organism>
    <name type="scientific">Aedes aegypti</name>
    <name type="common">Yellowfever mosquito</name>
    <name type="synonym">Culex aegypti</name>
    <dbReference type="NCBI Taxonomy" id="7159"/>
    <lineage>
        <taxon>Eukaryota</taxon>
        <taxon>Metazoa</taxon>
        <taxon>Ecdysozoa</taxon>
        <taxon>Arthropoda</taxon>
        <taxon>Hexapoda</taxon>
        <taxon>Insecta</taxon>
        <taxon>Pterygota</taxon>
        <taxon>Neoptera</taxon>
        <taxon>Endopterygota</taxon>
        <taxon>Diptera</taxon>
        <taxon>Nematocera</taxon>
        <taxon>Culicoidea</taxon>
        <taxon>Culicidae</taxon>
        <taxon>Culicinae</taxon>
        <taxon>Aedini</taxon>
        <taxon>Aedes</taxon>
        <taxon>Stegomyia</taxon>
    </lineage>
</organism>
<gene>
    <name evidence="2" type="primary">cry</name>
    <name type="ORF">AAEL004146</name>
</gene>
<name>CRY1_AEDAE</name>
<keyword id="KW-0090">Biological rhythms</keyword>
<keyword id="KW-0157">Chromophore</keyword>
<keyword id="KW-0963">Cytoplasm</keyword>
<keyword id="KW-0274">FAD</keyword>
<keyword id="KW-0285">Flavoprotein</keyword>
<keyword id="KW-0547">Nucleotide-binding</keyword>
<keyword id="KW-0539">Nucleus</keyword>
<keyword id="KW-0600">Photoreceptor protein</keyword>
<keyword id="KW-0675">Receptor</keyword>
<keyword id="KW-1185">Reference proteome</keyword>
<keyword id="KW-0678">Repressor</keyword>
<keyword id="KW-0716">Sensory transduction</keyword>
<keyword id="KW-0804">Transcription</keyword>
<keyword id="KW-0805">Transcription regulation</keyword>
<evidence type="ECO:0000250" key="1"/>
<evidence type="ECO:0000250" key="2">
    <source>
        <dbReference type="UniProtKB" id="O77059"/>
    </source>
</evidence>
<evidence type="ECO:0000255" key="3"/>
<evidence type="ECO:0000312" key="4">
    <source>
        <dbReference type="EMBL" id="EAT44496.1"/>
    </source>
</evidence>
<comment type="function">
    <text evidence="1">Blue light-dependent regulator that is the input of the circadian feedback loop. Has no photolyase activity for cyclobutane pyrimidine dimers or 6-4 photoproducts. Regulation of expression by light suggests a role in photoreception for locomotor activity rhythms. Functions, together with per, as a transcriptional repressor required for the oscillation of peripheral circadian clocks and for the correct specification of clock cells. Genes directly activated by the transcription factors Clock (Clk) and cycle (cyc) are repressed by cry (By similarity).</text>
</comment>
<comment type="cofactor">
    <cofactor evidence="2">
        <name>FAD</name>
        <dbReference type="ChEBI" id="CHEBI:57692"/>
    </cofactor>
    <text evidence="2">Binds 1 FAD per subunit.</text>
</comment>
<comment type="subunit">
    <text evidence="2">Interacts with tim and per; promoted by light conditions.</text>
</comment>
<comment type="subcellular location">
    <subcellularLocation>
        <location evidence="2">Cytoplasm</location>
    </subcellularLocation>
    <subcellularLocation>
        <location evidence="2">Cytoplasm</location>
        <location evidence="2">Perinuclear region</location>
    </subcellularLocation>
    <subcellularLocation>
        <location evidence="2">Nucleus</location>
    </subcellularLocation>
    <text evidence="1">Nuclear translocation initiates after the perception of a light signal.</text>
</comment>
<comment type="domain">
    <text>FAD-binding region regulates cry stability, cry-tim interaction, and circadian photosensitivity.</text>
</comment>
<comment type="domain">
    <text evidence="1">Photolyase/cryptochrome alpha/beta domain is sufficient for light detection and phototransduction.</text>
</comment>
<comment type="similarity">
    <text evidence="3">Belongs to the DNA photolyase class-1 family.</text>
</comment>